<keyword id="KW-0488">Methylation</keyword>
<keyword id="KW-1185">Reference proteome</keyword>
<keyword id="KW-0687">Ribonucleoprotein</keyword>
<keyword id="KW-0689">Ribosomal protein</keyword>
<keyword id="KW-0694">RNA-binding</keyword>
<keyword id="KW-0699">rRNA-binding</keyword>
<protein>
    <recommendedName>
        <fullName evidence="1">Large ribosomal subunit protein uL3</fullName>
    </recommendedName>
    <alternativeName>
        <fullName evidence="2">50S ribosomal protein L3</fullName>
    </alternativeName>
</protein>
<reference key="1">
    <citation type="journal article" date="2002" name="Proc. Natl. Acad. Sci. U.S.A.">
        <title>Extensive mosaic structure revealed by the complete genome sequence of uropathogenic Escherichia coli.</title>
        <authorList>
            <person name="Welch R.A."/>
            <person name="Burland V."/>
            <person name="Plunkett G. III"/>
            <person name="Redford P."/>
            <person name="Roesch P."/>
            <person name="Rasko D."/>
            <person name="Buckles E.L."/>
            <person name="Liou S.-R."/>
            <person name="Boutin A."/>
            <person name="Hackett J."/>
            <person name="Stroud D."/>
            <person name="Mayhew G.F."/>
            <person name="Rose D.J."/>
            <person name="Zhou S."/>
            <person name="Schwartz D.C."/>
            <person name="Perna N.T."/>
            <person name="Mobley H.L.T."/>
            <person name="Donnenberg M.S."/>
            <person name="Blattner F.R."/>
        </authorList>
    </citation>
    <scope>NUCLEOTIDE SEQUENCE [LARGE SCALE GENOMIC DNA]</scope>
    <source>
        <strain>CFT073 / ATCC 700928 / UPEC</strain>
    </source>
</reference>
<sequence>MIGLVGKKVGMTRIFTEDGVSIPVTVIEVEANRVTQVKDLANDGYRAIQVTTGAKKANRVTKPEAGHFAKAGVEAGRGLWEFRLAEGEEFTVGQSISVELFADVKKVDVTGTSKGKGFAGTVKRWNFRTQDATHGNSLSHRVPGSIGQNQTPGKVFKGKKMAGQMGNERVTVQSLDVVRVDAERNLLLVKGAVPGATGSDLIVKPAVKA</sequence>
<evidence type="ECO:0000255" key="1">
    <source>
        <dbReference type="HAMAP-Rule" id="MF_01325"/>
    </source>
</evidence>
<evidence type="ECO:0000305" key="2"/>
<name>RL3_ECOL6</name>
<comment type="function">
    <text evidence="1">One of the primary rRNA binding proteins, it binds directly near the 3'-end of the 23S rRNA, where it nucleates assembly of the 50S subunit.</text>
</comment>
<comment type="subunit">
    <text evidence="1">Part of the 50S ribosomal subunit. Forms a cluster with proteins L14 and L19.</text>
</comment>
<comment type="PTM">
    <text evidence="1">Methylated by PrmB.</text>
</comment>
<comment type="similarity">
    <text evidence="1">Belongs to the universal ribosomal protein uL3 family.</text>
</comment>
<dbReference type="EMBL" id="AE014075">
    <property type="protein sequence ID" value="AAN82529.1"/>
    <property type="molecule type" value="Genomic_DNA"/>
</dbReference>
<dbReference type="RefSeq" id="WP_000579833.1">
    <property type="nucleotide sequence ID" value="NZ_CP051263.1"/>
</dbReference>
<dbReference type="SMR" id="P60439"/>
<dbReference type="STRING" id="199310.c4091"/>
<dbReference type="GeneID" id="86948184"/>
<dbReference type="KEGG" id="ecc:c4091"/>
<dbReference type="eggNOG" id="COG0087">
    <property type="taxonomic scope" value="Bacteria"/>
</dbReference>
<dbReference type="HOGENOM" id="CLU_044142_4_1_6"/>
<dbReference type="BioCyc" id="ECOL199310:C4091-MONOMER"/>
<dbReference type="Proteomes" id="UP000001410">
    <property type="component" value="Chromosome"/>
</dbReference>
<dbReference type="GO" id="GO:0022625">
    <property type="term" value="C:cytosolic large ribosomal subunit"/>
    <property type="evidence" value="ECO:0007669"/>
    <property type="project" value="TreeGrafter"/>
</dbReference>
<dbReference type="GO" id="GO:0019843">
    <property type="term" value="F:rRNA binding"/>
    <property type="evidence" value="ECO:0007669"/>
    <property type="project" value="UniProtKB-UniRule"/>
</dbReference>
<dbReference type="GO" id="GO:0003735">
    <property type="term" value="F:structural constituent of ribosome"/>
    <property type="evidence" value="ECO:0007669"/>
    <property type="project" value="InterPro"/>
</dbReference>
<dbReference type="GO" id="GO:0006412">
    <property type="term" value="P:translation"/>
    <property type="evidence" value="ECO:0007669"/>
    <property type="project" value="UniProtKB-UniRule"/>
</dbReference>
<dbReference type="FunFam" id="2.40.30.10:FF:000004">
    <property type="entry name" value="50S ribosomal protein L3"/>
    <property type="match status" value="1"/>
</dbReference>
<dbReference type="FunFam" id="3.30.160.810:FF:000001">
    <property type="entry name" value="50S ribosomal protein L3"/>
    <property type="match status" value="1"/>
</dbReference>
<dbReference type="Gene3D" id="3.30.160.810">
    <property type="match status" value="1"/>
</dbReference>
<dbReference type="Gene3D" id="2.40.30.10">
    <property type="entry name" value="Translation factors"/>
    <property type="match status" value="1"/>
</dbReference>
<dbReference type="HAMAP" id="MF_01325_B">
    <property type="entry name" value="Ribosomal_uL3_B"/>
    <property type="match status" value="1"/>
</dbReference>
<dbReference type="InterPro" id="IPR000597">
    <property type="entry name" value="Ribosomal_uL3"/>
</dbReference>
<dbReference type="InterPro" id="IPR019927">
    <property type="entry name" value="Ribosomal_uL3_bac/org-type"/>
</dbReference>
<dbReference type="InterPro" id="IPR019926">
    <property type="entry name" value="Ribosomal_uL3_CS"/>
</dbReference>
<dbReference type="InterPro" id="IPR009000">
    <property type="entry name" value="Transl_B-barrel_sf"/>
</dbReference>
<dbReference type="NCBIfam" id="TIGR03625">
    <property type="entry name" value="L3_bact"/>
    <property type="match status" value="1"/>
</dbReference>
<dbReference type="PANTHER" id="PTHR11229">
    <property type="entry name" value="50S RIBOSOMAL PROTEIN L3"/>
    <property type="match status" value="1"/>
</dbReference>
<dbReference type="PANTHER" id="PTHR11229:SF16">
    <property type="entry name" value="LARGE RIBOSOMAL SUBUNIT PROTEIN UL3C"/>
    <property type="match status" value="1"/>
</dbReference>
<dbReference type="Pfam" id="PF00297">
    <property type="entry name" value="Ribosomal_L3"/>
    <property type="match status" value="1"/>
</dbReference>
<dbReference type="SUPFAM" id="SSF50447">
    <property type="entry name" value="Translation proteins"/>
    <property type="match status" value="1"/>
</dbReference>
<dbReference type="PROSITE" id="PS00474">
    <property type="entry name" value="RIBOSOMAL_L3"/>
    <property type="match status" value="1"/>
</dbReference>
<gene>
    <name evidence="1" type="primary">rplC</name>
    <name type="ordered locus">c4091</name>
</gene>
<feature type="chain" id="PRO_0000077099" description="Large ribosomal subunit protein uL3">
    <location>
        <begin position="1"/>
        <end position="209"/>
    </location>
</feature>
<feature type="modified residue" description="N5-methylglutamine" evidence="1">
    <location>
        <position position="150"/>
    </location>
</feature>
<organism>
    <name type="scientific">Escherichia coli O6:H1 (strain CFT073 / ATCC 700928 / UPEC)</name>
    <dbReference type="NCBI Taxonomy" id="199310"/>
    <lineage>
        <taxon>Bacteria</taxon>
        <taxon>Pseudomonadati</taxon>
        <taxon>Pseudomonadota</taxon>
        <taxon>Gammaproteobacteria</taxon>
        <taxon>Enterobacterales</taxon>
        <taxon>Enterobacteriaceae</taxon>
        <taxon>Escherichia</taxon>
    </lineage>
</organism>
<accession>P60439</accession>
<accession>P02386</accession>
<proteinExistence type="inferred from homology"/>